<accession>Q6BY27</accession>
<gene>
    <name type="primary">DBP2</name>
    <name type="ordered locus">DEHA2A12958g</name>
</gene>
<protein>
    <recommendedName>
        <fullName>ATP-dependent RNA helicase DBP2</fullName>
        <ecNumber>3.6.4.13</ecNumber>
    </recommendedName>
</protein>
<name>DBP2_DEBHA</name>
<evidence type="ECO:0000250" key="1"/>
<evidence type="ECO:0000255" key="2">
    <source>
        <dbReference type="PROSITE-ProRule" id="PRU00541"/>
    </source>
</evidence>
<evidence type="ECO:0000255" key="3">
    <source>
        <dbReference type="PROSITE-ProRule" id="PRU00542"/>
    </source>
</evidence>
<evidence type="ECO:0000256" key="4">
    <source>
        <dbReference type="SAM" id="MobiDB-lite"/>
    </source>
</evidence>
<evidence type="ECO:0000305" key="5"/>
<comment type="function">
    <text evidence="1">ATP-dependent RNA helicase involved nonsense-mediated mRNA decay and ribosome biogenesis through rRNA processing.</text>
</comment>
<comment type="catalytic activity">
    <reaction>
        <text>ATP + H2O = ADP + phosphate + H(+)</text>
        <dbReference type="Rhea" id="RHEA:13065"/>
        <dbReference type="ChEBI" id="CHEBI:15377"/>
        <dbReference type="ChEBI" id="CHEBI:15378"/>
        <dbReference type="ChEBI" id="CHEBI:30616"/>
        <dbReference type="ChEBI" id="CHEBI:43474"/>
        <dbReference type="ChEBI" id="CHEBI:456216"/>
        <dbReference type="EC" id="3.6.4.13"/>
    </reaction>
</comment>
<comment type="subunit">
    <text evidence="1">Associates with polysomes.</text>
</comment>
<comment type="subcellular location">
    <subcellularLocation>
        <location evidence="1">Cytoplasm</location>
    </subcellularLocation>
    <subcellularLocation>
        <location evidence="1">Nucleus</location>
    </subcellularLocation>
</comment>
<comment type="domain">
    <text>The Q motif is unique to and characteristic of the DEAD box family of RNA helicases and controls ATP binding and hydrolysis.</text>
</comment>
<comment type="similarity">
    <text evidence="5">Belongs to the DEAD box helicase family. DDX5/DBP2 subfamily.</text>
</comment>
<proteinExistence type="inferred from homology"/>
<reference key="1">
    <citation type="journal article" date="2004" name="Nature">
        <title>Genome evolution in yeasts.</title>
        <authorList>
            <person name="Dujon B."/>
            <person name="Sherman D."/>
            <person name="Fischer G."/>
            <person name="Durrens P."/>
            <person name="Casaregola S."/>
            <person name="Lafontaine I."/>
            <person name="de Montigny J."/>
            <person name="Marck C."/>
            <person name="Neuveglise C."/>
            <person name="Talla E."/>
            <person name="Goffard N."/>
            <person name="Frangeul L."/>
            <person name="Aigle M."/>
            <person name="Anthouard V."/>
            <person name="Babour A."/>
            <person name="Barbe V."/>
            <person name="Barnay S."/>
            <person name="Blanchin S."/>
            <person name="Beckerich J.-M."/>
            <person name="Beyne E."/>
            <person name="Bleykasten C."/>
            <person name="Boisrame A."/>
            <person name="Boyer J."/>
            <person name="Cattolico L."/>
            <person name="Confanioleri F."/>
            <person name="de Daruvar A."/>
            <person name="Despons L."/>
            <person name="Fabre E."/>
            <person name="Fairhead C."/>
            <person name="Ferry-Dumazet H."/>
            <person name="Groppi A."/>
            <person name="Hantraye F."/>
            <person name="Hennequin C."/>
            <person name="Jauniaux N."/>
            <person name="Joyet P."/>
            <person name="Kachouri R."/>
            <person name="Kerrest A."/>
            <person name="Koszul R."/>
            <person name="Lemaire M."/>
            <person name="Lesur I."/>
            <person name="Ma L."/>
            <person name="Muller H."/>
            <person name="Nicaud J.-M."/>
            <person name="Nikolski M."/>
            <person name="Oztas S."/>
            <person name="Ozier-Kalogeropoulos O."/>
            <person name="Pellenz S."/>
            <person name="Potier S."/>
            <person name="Richard G.-F."/>
            <person name="Straub M.-L."/>
            <person name="Suleau A."/>
            <person name="Swennen D."/>
            <person name="Tekaia F."/>
            <person name="Wesolowski-Louvel M."/>
            <person name="Westhof E."/>
            <person name="Wirth B."/>
            <person name="Zeniou-Meyer M."/>
            <person name="Zivanovic Y."/>
            <person name="Bolotin-Fukuhara M."/>
            <person name="Thierry A."/>
            <person name="Bouchier C."/>
            <person name="Caudron B."/>
            <person name="Scarpelli C."/>
            <person name="Gaillardin C."/>
            <person name="Weissenbach J."/>
            <person name="Wincker P."/>
            <person name="Souciet J.-L."/>
        </authorList>
    </citation>
    <scope>NUCLEOTIDE SEQUENCE [LARGE SCALE GENOMIC DNA]</scope>
    <source>
        <strain>ATCC 36239 / CBS 767 / BCRC 21394 / JCM 1990 / NBRC 0083 / IGC 2968</strain>
    </source>
</reference>
<dbReference type="EC" id="3.6.4.13"/>
<dbReference type="EMBL" id="CR382133">
    <property type="protein sequence ID" value="CAG84869.1"/>
    <property type="molecule type" value="Genomic_DNA"/>
</dbReference>
<dbReference type="RefSeq" id="XP_456892.1">
    <property type="nucleotide sequence ID" value="XM_456892.1"/>
</dbReference>
<dbReference type="SMR" id="Q6BY27"/>
<dbReference type="FunCoup" id="Q6BY27">
    <property type="interactions" value="1281"/>
</dbReference>
<dbReference type="STRING" id="284592.Q6BY27"/>
<dbReference type="GeneID" id="2899413"/>
<dbReference type="KEGG" id="dha:DEHA2A12958g"/>
<dbReference type="VEuPathDB" id="FungiDB:DEHA2A12958g"/>
<dbReference type="eggNOG" id="KOG0331">
    <property type="taxonomic scope" value="Eukaryota"/>
</dbReference>
<dbReference type="HOGENOM" id="CLU_003041_16_9_1"/>
<dbReference type="InParanoid" id="Q6BY27"/>
<dbReference type="OMA" id="STMPKFE"/>
<dbReference type="OrthoDB" id="196131at2759"/>
<dbReference type="Proteomes" id="UP000000599">
    <property type="component" value="Chromosome A"/>
</dbReference>
<dbReference type="GO" id="GO:0005737">
    <property type="term" value="C:cytoplasm"/>
    <property type="evidence" value="ECO:0007669"/>
    <property type="project" value="UniProtKB-SubCell"/>
</dbReference>
<dbReference type="GO" id="GO:0005634">
    <property type="term" value="C:nucleus"/>
    <property type="evidence" value="ECO:0007669"/>
    <property type="project" value="UniProtKB-SubCell"/>
</dbReference>
<dbReference type="GO" id="GO:0005524">
    <property type="term" value="F:ATP binding"/>
    <property type="evidence" value="ECO:0007669"/>
    <property type="project" value="UniProtKB-KW"/>
</dbReference>
<dbReference type="GO" id="GO:0016887">
    <property type="term" value="F:ATP hydrolysis activity"/>
    <property type="evidence" value="ECO:0007669"/>
    <property type="project" value="RHEA"/>
</dbReference>
<dbReference type="GO" id="GO:0051880">
    <property type="term" value="F:G-quadruplex DNA binding"/>
    <property type="evidence" value="ECO:0007669"/>
    <property type="project" value="EnsemblFungi"/>
</dbReference>
<dbReference type="GO" id="GO:0002151">
    <property type="term" value="F:G-quadruplex RNA binding"/>
    <property type="evidence" value="ECO:0007669"/>
    <property type="project" value="EnsemblFungi"/>
</dbReference>
<dbReference type="GO" id="GO:0003729">
    <property type="term" value="F:mRNA binding"/>
    <property type="evidence" value="ECO:0007669"/>
    <property type="project" value="EnsemblFungi"/>
</dbReference>
<dbReference type="GO" id="GO:0003724">
    <property type="term" value="F:RNA helicase activity"/>
    <property type="evidence" value="ECO:0007669"/>
    <property type="project" value="UniProtKB-EC"/>
</dbReference>
<dbReference type="GO" id="GO:0030515">
    <property type="term" value="F:snoRNA binding"/>
    <property type="evidence" value="ECO:0007669"/>
    <property type="project" value="EnsemblFungi"/>
</dbReference>
<dbReference type="GO" id="GO:0071042">
    <property type="term" value="P:nuclear polyadenylation-dependent mRNA catabolic process"/>
    <property type="evidence" value="ECO:0007669"/>
    <property type="project" value="EnsemblFungi"/>
</dbReference>
<dbReference type="GO" id="GO:0000184">
    <property type="term" value="P:nuclear-transcribed mRNA catabolic process, nonsense-mediated decay"/>
    <property type="evidence" value="ECO:0007669"/>
    <property type="project" value="UniProtKB-KW"/>
</dbReference>
<dbReference type="GO" id="GO:0006364">
    <property type="term" value="P:rRNA processing"/>
    <property type="evidence" value="ECO:0007669"/>
    <property type="project" value="UniProtKB-KW"/>
</dbReference>
<dbReference type="GO" id="GO:0006369">
    <property type="term" value="P:termination of RNA polymerase II transcription"/>
    <property type="evidence" value="ECO:0007669"/>
    <property type="project" value="EnsemblFungi"/>
</dbReference>
<dbReference type="CDD" id="cd17966">
    <property type="entry name" value="DEADc_DDX5_DDX17"/>
    <property type="match status" value="1"/>
</dbReference>
<dbReference type="CDD" id="cd18787">
    <property type="entry name" value="SF2_C_DEAD"/>
    <property type="match status" value="1"/>
</dbReference>
<dbReference type="FunFam" id="3.40.50.300:FF:000008">
    <property type="entry name" value="ATP-dependent RNA helicase RhlB"/>
    <property type="match status" value="1"/>
</dbReference>
<dbReference type="FunFam" id="3.40.50.300:FF:000079">
    <property type="entry name" value="probable ATP-dependent RNA helicase DDX17"/>
    <property type="match status" value="1"/>
</dbReference>
<dbReference type="Gene3D" id="3.40.50.300">
    <property type="entry name" value="P-loop containing nucleotide triphosphate hydrolases"/>
    <property type="match status" value="2"/>
</dbReference>
<dbReference type="InterPro" id="IPR011545">
    <property type="entry name" value="DEAD/DEAH_box_helicase_dom"/>
</dbReference>
<dbReference type="InterPro" id="IPR014001">
    <property type="entry name" value="Helicase_ATP-bd"/>
</dbReference>
<dbReference type="InterPro" id="IPR001650">
    <property type="entry name" value="Helicase_C-like"/>
</dbReference>
<dbReference type="InterPro" id="IPR027417">
    <property type="entry name" value="P-loop_NTPase"/>
</dbReference>
<dbReference type="InterPro" id="IPR000629">
    <property type="entry name" value="RNA-helicase_DEAD-box_CS"/>
</dbReference>
<dbReference type="InterPro" id="IPR014014">
    <property type="entry name" value="RNA_helicase_DEAD_Q_motif"/>
</dbReference>
<dbReference type="PANTHER" id="PTHR47958">
    <property type="entry name" value="ATP-DEPENDENT RNA HELICASE DBP3"/>
    <property type="match status" value="1"/>
</dbReference>
<dbReference type="Pfam" id="PF00270">
    <property type="entry name" value="DEAD"/>
    <property type="match status" value="1"/>
</dbReference>
<dbReference type="Pfam" id="PF00271">
    <property type="entry name" value="Helicase_C"/>
    <property type="match status" value="1"/>
</dbReference>
<dbReference type="SMART" id="SM00487">
    <property type="entry name" value="DEXDc"/>
    <property type="match status" value="1"/>
</dbReference>
<dbReference type="SMART" id="SM00490">
    <property type="entry name" value="HELICc"/>
    <property type="match status" value="1"/>
</dbReference>
<dbReference type="SUPFAM" id="SSF52540">
    <property type="entry name" value="P-loop containing nucleoside triphosphate hydrolases"/>
    <property type="match status" value="1"/>
</dbReference>
<dbReference type="PROSITE" id="PS00039">
    <property type="entry name" value="DEAD_ATP_HELICASE"/>
    <property type="match status" value="1"/>
</dbReference>
<dbReference type="PROSITE" id="PS51192">
    <property type="entry name" value="HELICASE_ATP_BIND_1"/>
    <property type="match status" value="1"/>
</dbReference>
<dbReference type="PROSITE" id="PS51194">
    <property type="entry name" value="HELICASE_CTER"/>
    <property type="match status" value="1"/>
</dbReference>
<dbReference type="PROSITE" id="PS51195">
    <property type="entry name" value="Q_MOTIF"/>
    <property type="match status" value="1"/>
</dbReference>
<feature type="chain" id="PRO_0000054996" description="ATP-dependent RNA helicase DBP2">
    <location>
        <begin position="1"/>
        <end position="536"/>
    </location>
</feature>
<feature type="domain" description="Helicase ATP-binding" evidence="2">
    <location>
        <begin position="136"/>
        <end position="311"/>
    </location>
</feature>
<feature type="domain" description="Helicase C-terminal" evidence="3">
    <location>
        <begin position="326"/>
        <end position="486"/>
    </location>
</feature>
<feature type="region of interest" description="Disordered" evidence="4">
    <location>
        <begin position="496"/>
        <end position="536"/>
    </location>
</feature>
<feature type="region of interest" description="RNA-binding RGG-box" evidence="1">
    <location>
        <begin position="496"/>
        <end position="520"/>
    </location>
</feature>
<feature type="short sequence motif" description="Q motif">
    <location>
        <begin position="105"/>
        <end position="133"/>
    </location>
</feature>
<feature type="short sequence motif" description="DEAD box">
    <location>
        <begin position="259"/>
        <end position="262"/>
    </location>
</feature>
<feature type="compositionally biased region" description="Gly residues" evidence="4">
    <location>
        <begin position="497"/>
        <end position="522"/>
    </location>
</feature>
<feature type="binding site" evidence="2">
    <location>
        <begin position="149"/>
        <end position="156"/>
    </location>
    <ligand>
        <name>ATP</name>
        <dbReference type="ChEBI" id="CHEBI:30616"/>
    </ligand>
</feature>
<keyword id="KW-0067">ATP-binding</keyword>
<keyword id="KW-0963">Cytoplasm</keyword>
<keyword id="KW-0347">Helicase</keyword>
<keyword id="KW-0378">Hydrolase</keyword>
<keyword id="KW-0866">Nonsense-mediated mRNA decay</keyword>
<keyword id="KW-0547">Nucleotide-binding</keyword>
<keyword id="KW-0539">Nucleus</keyword>
<keyword id="KW-1185">Reference proteome</keyword>
<keyword id="KW-0690">Ribosome biogenesis</keyword>
<keyword id="KW-0694">RNA-binding</keyword>
<keyword id="KW-0698">rRNA processing</keyword>
<organism>
    <name type="scientific">Debaryomyces hansenii (strain ATCC 36239 / CBS 767 / BCRC 21394 / JCM 1990 / NBRC 0083 / IGC 2968)</name>
    <name type="common">Yeast</name>
    <name type="synonym">Torulaspora hansenii</name>
    <dbReference type="NCBI Taxonomy" id="284592"/>
    <lineage>
        <taxon>Eukaryota</taxon>
        <taxon>Fungi</taxon>
        <taxon>Dikarya</taxon>
        <taxon>Ascomycota</taxon>
        <taxon>Saccharomycotina</taxon>
        <taxon>Pichiomycetes</taxon>
        <taxon>Debaryomycetaceae</taxon>
        <taxon>Debaryomyces</taxon>
    </lineage>
</organism>
<sequence>MSYNNNSDSYGGGYNSYGGNSYGGGGYGGGRGGGRGGFGGRGGGRYDERVELNTPEWDIDSLPKFEKNFYNEHPDVTARSVQDVNAFRKEHDMKCDGTDIPKPITSFDEAGFPDYVLKEVKQQGFPKPTSIQCQGWPMALSGRDMVGIASTGSGKTLSYCLPSIVHINAQPLLSPGDGPIVLVLAPTRELAVQIQQECSKFGSSSRIRNTCVYGGAPKGQQIRDLARGVEICIATPGRLIDMLETGKTNLRRVTYLVLDEADRMLDMGFEPQIRKIVDQIRPDRQTLMWSATWPKEVQALTRDYLNDPIQVTVGSLELAASHTITQLVEVVTEFEKRDRLIKHLETATADPEAKCLIFASTKRTCDEITNYLRADGWPALAIHGDKQQGERDWVLKEFKTGKSPIMVATDVAARGIDVKGISYVINLDMPGNIEDYVHRIGRTGRAGSTGTAVSFFTDNNSKLGGDLCKIMREANQTIPPELMRFDRRSFGSHIRYGRGGGRGGFRGGRGRGGFRGGRGGYQSGSNSAPLGNARRY</sequence>